<organism>
    <name type="scientific">Rickettsia peacockii (strain Rustic)</name>
    <dbReference type="NCBI Taxonomy" id="562019"/>
    <lineage>
        <taxon>Bacteria</taxon>
        <taxon>Pseudomonadati</taxon>
        <taxon>Pseudomonadota</taxon>
        <taxon>Alphaproteobacteria</taxon>
        <taxon>Rickettsiales</taxon>
        <taxon>Rickettsiaceae</taxon>
        <taxon>Rickettsieae</taxon>
        <taxon>Rickettsia</taxon>
        <taxon>spotted fever group</taxon>
    </lineage>
</organism>
<keyword id="KW-0678">Repressor</keyword>
<keyword id="KW-0687">Ribonucleoprotein</keyword>
<keyword id="KW-0689">Ribosomal protein</keyword>
<keyword id="KW-0694">RNA-binding</keyword>
<keyword id="KW-0699">rRNA-binding</keyword>
<keyword id="KW-0810">Translation regulation</keyword>
<keyword id="KW-0820">tRNA-binding</keyword>
<name>RL1_RICPU</name>
<reference key="1">
    <citation type="journal article" date="2009" name="PLoS ONE">
        <title>Genome sequence of the endosymbiont Rickettsia peacockii and comparison with virulent Rickettsia rickettsii: identification of virulence factors.</title>
        <authorList>
            <person name="Felsheim R.F."/>
            <person name="Kurtti T.J."/>
            <person name="Munderloh U.G."/>
        </authorList>
    </citation>
    <scope>NUCLEOTIDE SEQUENCE [LARGE SCALE GENOMIC DNA]</scope>
    <source>
        <strain>Rustic</strain>
    </source>
</reference>
<comment type="function">
    <text evidence="1">Binds directly to 23S rRNA. The L1 stalk is quite mobile in the ribosome, and is involved in E site tRNA release.</text>
</comment>
<comment type="function">
    <text evidence="1">Protein L1 is also a translational repressor protein, it controls the translation of the L11 operon by binding to its mRNA.</text>
</comment>
<comment type="subunit">
    <text evidence="1">Part of the 50S ribosomal subunit.</text>
</comment>
<comment type="similarity">
    <text evidence="1">Belongs to the universal ribosomal protein uL1 family.</text>
</comment>
<gene>
    <name evidence="1" type="primary">rplA</name>
    <name type="ordered locus">RPR_03970</name>
</gene>
<proteinExistence type="inferred from homology"/>
<protein>
    <recommendedName>
        <fullName evidence="1">Large ribosomal subunit protein uL1</fullName>
    </recommendedName>
    <alternativeName>
        <fullName evidence="2">50S ribosomal protein L1</fullName>
    </alternativeName>
</protein>
<sequence length="239" mass="25520">MSNKKDVAVKISGGKKIREAREKVKSDTLYNLTNAVERLKSASYVKFDPTLEIVMKLGIDSRHSDQMVRGVVNLPAGTGKTVRVAVICKEEREEEAKSAGADLVGSTNIIDEIKAGKINFDVCIATPDMMAAIGSVARILGPKGLMPNPKLGTVTLDIKNAIKNAKSGQVEYRAEKAGIIHAGLGKLSFSDQDLLKNLNAFIEAVIKAKPAGLKGSYLKAMYLSSTMGASVQIDLTSIA</sequence>
<feature type="chain" id="PRO_1000214432" description="Large ribosomal subunit protein uL1">
    <location>
        <begin position="1"/>
        <end position="239"/>
    </location>
</feature>
<evidence type="ECO:0000255" key="1">
    <source>
        <dbReference type="HAMAP-Rule" id="MF_01318"/>
    </source>
</evidence>
<evidence type="ECO:0000305" key="2"/>
<dbReference type="EMBL" id="CP001227">
    <property type="protein sequence ID" value="ACR47492.1"/>
    <property type="molecule type" value="Genomic_DNA"/>
</dbReference>
<dbReference type="RefSeq" id="WP_010976849.1">
    <property type="nucleotide sequence ID" value="NC_012730.1"/>
</dbReference>
<dbReference type="SMR" id="C4K1P2"/>
<dbReference type="GeneID" id="928013"/>
<dbReference type="KEGG" id="rpk:RPR_03970"/>
<dbReference type="HOGENOM" id="CLU_062853_0_0_5"/>
<dbReference type="Proteomes" id="UP000005015">
    <property type="component" value="Chromosome"/>
</dbReference>
<dbReference type="GO" id="GO:0015934">
    <property type="term" value="C:large ribosomal subunit"/>
    <property type="evidence" value="ECO:0007669"/>
    <property type="project" value="InterPro"/>
</dbReference>
<dbReference type="GO" id="GO:0019843">
    <property type="term" value="F:rRNA binding"/>
    <property type="evidence" value="ECO:0007669"/>
    <property type="project" value="UniProtKB-UniRule"/>
</dbReference>
<dbReference type="GO" id="GO:0003735">
    <property type="term" value="F:structural constituent of ribosome"/>
    <property type="evidence" value="ECO:0007669"/>
    <property type="project" value="InterPro"/>
</dbReference>
<dbReference type="GO" id="GO:0000049">
    <property type="term" value="F:tRNA binding"/>
    <property type="evidence" value="ECO:0007669"/>
    <property type="project" value="UniProtKB-KW"/>
</dbReference>
<dbReference type="GO" id="GO:0006417">
    <property type="term" value="P:regulation of translation"/>
    <property type="evidence" value="ECO:0007669"/>
    <property type="project" value="UniProtKB-KW"/>
</dbReference>
<dbReference type="GO" id="GO:0006412">
    <property type="term" value="P:translation"/>
    <property type="evidence" value="ECO:0007669"/>
    <property type="project" value="UniProtKB-UniRule"/>
</dbReference>
<dbReference type="CDD" id="cd00403">
    <property type="entry name" value="Ribosomal_L1"/>
    <property type="match status" value="1"/>
</dbReference>
<dbReference type="FunFam" id="3.40.50.790:FF:000001">
    <property type="entry name" value="50S ribosomal protein L1"/>
    <property type="match status" value="1"/>
</dbReference>
<dbReference type="Gene3D" id="3.30.190.20">
    <property type="match status" value="1"/>
</dbReference>
<dbReference type="Gene3D" id="3.40.50.790">
    <property type="match status" value="1"/>
</dbReference>
<dbReference type="HAMAP" id="MF_01318_B">
    <property type="entry name" value="Ribosomal_uL1_B"/>
    <property type="match status" value="1"/>
</dbReference>
<dbReference type="InterPro" id="IPR005878">
    <property type="entry name" value="Ribosom_uL1_bac-type"/>
</dbReference>
<dbReference type="InterPro" id="IPR002143">
    <property type="entry name" value="Ribosomal_uL1"/>
</dbReference>
<dbReference type="InterPro" id="IPR023674">
    <property type="entry name" value="Ribosomal_uL1-like"/>
</dbReference>
<dbReference type="InterPro" id="IPR028364">
    <property type="entry name" value="Ribosomal_uL1/biogenesis"/>
</dbReference>
<dbReference type="InterPro" id="IPR016095">
    <property type="entry name" value="Ribosomal_uL1_3-a/b-sand"/>
</dbReference>
<dbReference type="InterPro" id="IPR023673">
    <property type="entry name" value="Ribosomal_uL1_CS"/>
</dbReference>
<dbReference type="NCBIfam" id="TIGR01169">
    <property type="entry name" value="rplA_bact"/>
    <property type="match status" value="1"/>
</dbReference>
<dbReference type="PANTHER" id="PTHR36427">
    <property type="entry name" value="54S RIBOSOMAL PROTEIN L1, MITOCHONDRIAL"/>
    <property type="match status" value="1"/>
</dbReference>
<dbReference type="PANTHER" id="PTHR36427:SF3">
    <property type="entry name" value="LARGE RIBOSOMAL SUBUNIT PROTEIN UL1M"/>
    <property type="match status" value="1"/>
</dbReference>
<dbReference type="Pfam" id="PF00687">
    <property type="entry name" value="Ribosomal_L1"/>
    <property type="match status" value="1"/>
</dbReference>
<dbReference type="PIRSF" id="PIRSF002155">
    <property type="entry name" value="Ribosomal_L1"/>
    <property type="match status" value="1"/>
</dbReference>
<dbReference type="SUPFAM" id="SSF56808">
    <property type="entry name" value="Ribosomal protein L1"/>
    <property type="match status" value="1"/>
</dbReference>
<dbReference type="PROSITE" id="PS01199">
    <property type="entry name" value="RIBOSOMAL_L1"/>
    <property type="match status" value="1"/>
</dbReference>
<accession>C4K1P2</accession>